<reference key="1">
    <citation type="submission" date="2007-01" db="EMBL/GenBank/DDBJ databases">
        <title>Color response of two red chrysanthemum cultivars to high temperature.</title>
        <authorList>
            <person name="Huh E.J."/>
            <person name="Kim T.H."/>
            <person name="Cho K.H."/>
            <person name="Lee Y.R."/>
            <person name="Goo D.H."/>
            <person name="Lee K.S."/>
            <person name="Choi S.R."/>
        </authorList>
    </citation>
    <scope>NUCLEOTIDE SEQUENCE [MRNA]</scope>
    <source>
        <strain>cv. Wembley</strain>
        <tissue>Petal</tissue>
    </source>
</reference>
<accession>A1E260</accession>
<organism>
    <name type="scientific">Chrysanthemum morifolium</name>
    <name type="common">Florist's daisy</name>
    <name type="synonym">Dendranthema grandiflorum</name>
    <dbReference type="NCBI Taxonomy" id="41568"/>
    <lineage>
        <taxon>Eukaryota</taxon>
        <taxon>Viridiplantae</taxon>
        <taxon>Streptophyta</taxon>
        <taxon>Embryophyta</taxon>
        <taxon>Tracheophyta</taxon>
        <taxon>Spermatophyta</taxon>
        <taxon>Magnoliopsida</taxon>
        <taxon>eudicotyledons</taxon>
        <taxon>Gunneridae</taxon>
        <taxon>Pentapetalae</taxon>
        <taxon>asterids</taxon>
        <taxon>campanulids</taxon>
        <taxon>Asterales</taxon>
        <taxon>Asteraceae</taxon>
        <taxon>Asteroideae</taxon>
        <taxon>Anthemideae</taxon>
        <taxon>Artemisiinae</taxon>
        <taxon>Chrysanthemum</taxon>
    </lineage>
</organism>
<sequence>MATPSSATSLNVENIVFPSSVKPPGDTNTLFLGGAGVRGMEIQGNFVKFTGIGVYLEDKAIPLLAGKWKGKTAEELVNSVEFFRDIVTGPFKKFTQVTMILPLTGKQYSEKVSEMCVGVWKAHGTYTDADGATIDKFLEVFKDENFPPGASILFTTSPDGSLTISFSKDGMIPEAANIVLENEKLAQAVIESVIGKNGVSPATKQSLASRLADLMNHFDEKATTDAEPNLSKNGL</sequence>
<comment type="function">
    <text evidence="1">Catalyzes the intramolecular cyclization of bicyclic chalcones into tricyclic (S)-flavanones. Responsible for the isomerization of 4,2',4',6'-tetrahydroxychalcone (also termed chalcone) into naringenin (By similarity).</text>
</comment>
<comment type="catalytic activity">
    <reaction>
        <text>a chalcone = a flavanone.</text>
        <dbReference type="EC" id="5.5.1.6"/>
    </reaction>
</comment>
<comment type="pathway">
    <text>Secondary metabolite biosynthesis; flavonoid biosynthesis.</text>
</comment>
<comment type="miscellaneous">
    <text>Part of the biosynthetic pathway for all classes of flavonoids, a large class of secondary plant metabolites, many of which are brightly colored.</text>
</comment>
<comment type="similarity">
    <text evidence="2">Belongs to the chalcone isomerase family.</text>
</comment>
<dbReference type="EC" id="5.5.1.6"/>
<dbReference type="EMBL" id="EF094933">
    <property type="protein sequence ID" value="ABK88308.2"/>
    <property type="molecule type" value="mRNA"/>
</dbReference>
<dbReference type="SMR" id="A1E260"/>
<dbReference type="UniPathway" id="UPA00154"/>
<dbReference type="GO" id="GO:0045430">
    <property type="term" value="F:chalcone isomerase activity"/>
    <property type="evidence" value="ECO:0007669"/>
    <property type="project" value="UniProtKB-EC"/>
</dbReference>
<dbReference type="GO" id="GO:0009813">
    <property type="term" value="P:flavonoid biosynthetic process"/>
    <property type="evidence" value="ECO:0007669"/>
    <property type="project" value="UniProtKB-UniPathway"/>
</dbReference>
<dbReference type="Gene3D" id="1.10.890.20">
    <property type="match status" value="1"/>
</dbReference>
<dbReference type="Gene3D" id="3.50.70.10">
    <property type="match status" value="1"/>
</dbReference>
<dbReference type="InterPro" id="IPR044164">
    <property type="entry name" value="CFI"/>
</dbReference>
<dbReference type="InterPro" id="IPR016087">
    <property type="entry name" value="Chalcone_isomerase"/>
</dbReference>
<dbReference type="InterPro" id="IPR016088">
    <property type="entry name" value="Chalcone_isomerase_3-sand"/>
</dbReference>
<dbReference type="InterPro" id="IPR016089">
    <property type="entry name" value="Chalcone_isomerase_bundle_sf"/>
</dbReference>
<dbReference type="InterPro" id="IPR036298">
    <property type="entry name" value="Chalcone_isomerase_sf"/>
</dbReference>
<dbReference type="PANTHER" id="PTHR28039:SF8">
    <property type="entry name" value="CHALCONE--FLAVANONE ISOMERASE 1-RELATED"/>
    <property type="match status" value="1"/>
</dbReference>
<dbReference type="PANTHER" id="PTHR28039">
    <property type="entry name" value="CHALCONE--FLAVONONE ISOMERASE 1-RELATED"/>
    <property type="match status" value="1"/>
</dbReference>
<dbReference type="Pfam" id="PF02431">
    <property type="entry name" value="Chalcone"/>
    <property type="match status" value="1"/>
</dbReference>
<dbReference type="SUPFAM" id="SSF54626">
    <property type="entry name" value="Chalcone isomerase"/>
    <property type="match status" value="1"/>
</dbReference>
<name>CFI1_CHRMO</name>
<evidence type="ECO:0000250" key="1"/>
<evidence type="ECO:0000305" key="2"/>
<protein>
    <recommendedName>
        <fullName>Chalcone--flavanone isomerase 1</fullName>
        <shortName>Chalcone isomerase 1</shortName>
        <ecNumber>5.5.1.6</ecNumber>
    </recommendedName>
    <alternativeName>
        <fullName>DgCHI1</fullName>
    </alternativeName>
</protein>
<gene>
    <name type="primary">CHI1</name>
</gene>
<feature type="chain" id="PRO_0000314571" description="Chalcone--flavanone isomerase 1">
    <location>
        <begin position="1"/>
        <end position="235"/>
    </location>
</feature>
<feature type="binding site" evidence="1">
    <location>
        <position position="50"/>
    </location>
    <ligand>
        <name>substrate</name>
    </ligand>
</feature>
<feature type="binding site" evidence="1">
    <location>
        <position position="192"/>
    </location>
    <ligand>
        <name>substrate</name>
    </ligand>
</feature>
<feature type="site" description="Important for catalytic activity" evidence="1">
    <location>
        <position position="108"/>
    </location>
</feature>
<proteinExistence type="evidence at transcript level"/>
<keyword id="KW-0284">Flavonoid biosynthesis</keyword>
<keyword id="KW-0413">Isomerase</keyword>